<dbReference type="EC" id="3.1.3.35" evidence="1"/>
<dbReference type="EC" id="3.1.3.5" evidence="3 4"/>
<dbReference type="EC" id="3.1.3.89" evidence="1"/>
<dbReference type="EC" id="3.1.3.91" evidence="1"/>
<dbReference type="EC" id="3.1.3.99" evidence="1"/>
<dbReference type="EMBL" id="D14541">
    <property type="protein sequence ID" value="BAA03408.1"/>
    <property type="molecule type" value="mRNA"/>
</dbReference>
<dbReference type="EMBL" id="S64302">
    <property type="protein sequence ID" value="AAB27698.1"/>
    <property type="molecule type" value="mRNA"/>
</dbReference>
<dbReference type="EMBL" id="BC114093">
    <property type="protein sequence ID" value="AAI14094.1"/>
    <property type="molecule type" value="mRNA"/>
</dbReference>
<dbReference type="EMBL" id="BT026240">
    <property type="protein sequence ID" value="ABG67079.1"/>
    <property type="molecule type" value="mRNA"/>
</dbReference>
<dbReference type="PIR" id="JX0269">
    <property type="entry name" value="JX0269"/>
</dbReference>
<dbReference type="RefSeq" id="NP_776554.2">
    <property type="nucleotide sequence ID" value="NM_174129.4"/>
</dbReference>
<dbReference type="SMR" id="Q05927"/>
<dbReference type="FunCoup" id="Q05927">
    <property type="interactions" value="209"/>
</dbReference>
<dbReference type="STRING" id="9913.ENSBTAP00000071808"/>
<dbReference type="GlyCosmos" id="Q05927">
    <property type="glycosylation" value="4 sites, No reported glycans"/>
</dbReference>
<dbReference type="GlyGen" id="Q05927">
    <property type="glycosylation" value="4 sites"/>
</dbReference>
<dbReference type="PaxDb" id="9913-ENSBTAP00000054917"/>
<dbReference type="GeneID" id="281363"/>
<dbReference type="KEGG" id="bta:281363"/>
<dbReference type="CTD" id="4907"/>
<dbReference type="eggNOG" id="KOG4419">
    <property type="taxonomic scope" value="Eukaryota"/>
</dbReference>
<dbReference type="InParanoid" id="Q05927"/>
<dbReference type="OrthoDB" id="7722975at2759"/>
<dbReference type="SABIO-RK" id="Q05927"/>
<dbReference type="Proteomes" id="UP000009136">
    <property type="component" value="Unplaced"/>
</dbReference>
<dbReference type="GO" id="GO:0016020">
    <property type="term" value="C:membrane"/>
    <property type="evidence" value="ECO:0000314"/>
    <property type="project" value="UniProtKB"/>
</dbReference>
<dbReference type="GO" id="GO:0005886">
    <property type="term" value="C:plasma membrane"/>
    <property type="evidence" value="ECO:0000318"/>
    <property type="project" value="GO_Central"/>
</dbReference>
<dbReference type="GO" id="GO:0098552">
    <property type="term" value="C:side of membrane"/>
    <property type="evidence" value="ECO:0007669"/>
    <property type="project" value="UniProtKB-KW"/>
</dbReference>
<dbReference type="GO" id="GO:0002953">
    <property type="term" value="F:5'-deoxynucleotidase activity"/>
    <property type="evidence" value="ECO:0007669"/>
    <property type="project" value="RHEA"/>
</dbReference>
<dbReference type="GO" id="GO:0008253">
    <property type="term" value="F:5'-nucleotidase activity"/>
    <property type="evidence" value="ECO:0000314"/>
    <property type="project" value="UniProtKB"/>
</dbReference>
<dbReference type="GO" id="GO:0050484">
    <property type="term" value="F:GMP 5'-nucleotidase activity"/>
    <property type="evidence" value="ECO:0007669"/>
    <property type="project" value="RHEA"/>
</dbReference>
<dbReference type="GO" id="GO:0042802">
    <property type="term" value="F:identical protein binding"/>
    <property type="evidence" value="ECO:0000314"/>
    <property type="project" value="UniProtKB"/>
</dbReference>
<dbReference type="GO" id="GO:0050483">
    <property type="term" value="F:IMP 5'-nucleotidase activity"/>
    <property type="evidence" value="ECO:0007669"/>
    <property type="project" value="RHEA"/>
</dbReference>
<dbReference type="GO" id="GO:0046872">
    <property type="term" value="F:metal ion binding"/>
    <property type="evidence" value="ECO:0007669"/>
    <property type="project" value="UniProtKB-KW"/>
</dbReference>
<dbReference type="GO" id="GO:0000166">
    <property type="term" value="F:nucleotide binding"/>
    <property type="evidence" value="ECO:0007669"/>
    <property type="project" value="UniProtKB-KW"/>
</dbReference>
<dbReference type="GO" id="GO:0050340">
    <property type="term" value="F:thymidylate 5'-phosphatase activity"/>
    <property type="evidence" value="ECO:0007669"/>
    <property type="project" value="RHEA"/>
</dbReference>
<dbReference type="GO" id="GO:0006196">
    <property type="term" value="P:AMP catabolic process"/>
    <property type="evidence" value="ECO:0000318"/>
    <property type="project" value="GO_Central"/>
</dbReference>
<dbReference type="CDD" id="cd07409">
    <property type="entry name" value="MPP_CD73_N"/>
    <property type="match status" value="1"/>
</dbReference>
<dbReference type="FunFam" id="3.90.780.10:FF:000001">
    <property type="entry name" value="NT5E isoform 3"/>
    <property type="match status" value="1"/>
</dbReference>
<dbReference type="FunFam" id="3.60.21.10:FF:000020">
    <property type="entry name" value="NT5E isoform 4"/>
    <property type="match status" value="1"/>
</dbReference>
<dbReference type="Gene3D" id="3.60.21.10">
    <property type="match status" value="1"/>
</dbReference>
<dbReference type="Gene3D" id="3.90.780.10">
    <property type="entry name" value="5'-Nucleotidase, C-terminal domain"/>
    <property type="match status" value="1"/>
</dbReference>
<dbReference type="InterPro" id="IPR008334">
    <property type="entry name" value="5'-Nucleotdase_C"/>
</dbReference>
<dbReference type="InterPro" id="IPR036907">
    <property type="entry name" value="5'-Nucleotdase_C_sf"/>
</dbReference>
<dbReference type="InterPro" id="IPR006146">
    <property type="entry name" value="5'-Nucleotdase_CS"/>
</dbReference>
<dbReference type="InterPro" id="IPR006179">
    <property type="entry name" value="5_nucleotidase/apyrase"/>
</dbReference>
<dbReference type="InterPro" id="IPR004843">
    <property type="entry name" value="Calcineurin-like_PHP_ApaH"/>
</dbReference>
<dbReference type="InterPro" id="IPR029052">
    <property type="entry name" value="Metallo-depent_PP-like"/>
</dbReference>
<dbReference type="PANTHER" id="PTHR11575:SF24">
    <property type="entry name" value="5'-NUCLEOTIDASE"/>
    <property type="match status" value="1"/>
</dbReference>
<dbReference type="PANTHER" id="PTHR11575">
    <property type="entry name" value="5'-NUCLEOTIDASE-RELATED"/>
    <property type="match status" value="1"/>
</dbReference>
<dbReference type="Pfam" id="PF02872">
    <property type="entry name" value="5_nucleotid_C"/>
    <property type="match status" value="1"/>
</dbReference>
<dbReference type="Pfam" id="PF00149">
    <property type="entry name" value="Metallophos"/>
    <property type="match status" value="1"/>
</dbReference>
<dbReference type="PRINTS" id="PR01607">
    <property type="entry name" value="APYRASEFAMLY"/>
</dbReference>
<dbReference type="SUPFAM" id="SSF55816">
    <property type="entry name" value="5'-nucleotidase (syn. UDP-sugar hydrolase), C-terminal domain"/>
    <property type="match status" value="1"/>
</dbReference>
<dbReference type="SUPFAM" id="SSF56300">
    <property type="entry name" value="Metallo-dependent phosphatases"/>
    <property type="match status" value="1"/>
</dbReference>
<dbReference type="PROSITE" id="PS00785">
    <property type="entry name" value="5_NUCLEOTIDASE_1"/>
    <property type="match status" value="1"/>
</dbReference>
<dbReference type="PROSITE" id="PS00786">
    <property type="entry name" value="5_NUCLEOTIDASE_2"/>
    <property type="match status" value="1"/>
</dbReference>
<sequence>MNPGAARTPALRILALGALLWPAARPWELTILHTNDVHSRLEQTSEDSSKCVNASRCVGGVARLATKVHQIRRAEPHVLLLDAGDQYQGTIWFTVYKGTEVAHFMNALGYDAMALGNHEFDNGVEGLIDPLLKEVNFPILSANIKAKGPLASKISGLYSPYKILTVGDEVVGIVGYTSKETPFLSNPGTNLVFEDEITALQPEVDKLKTLNVNKIIALGHSGFEVDKLIAQKVKGVDVVVGGHSNTFLYTGNPPSKEVPAGQYPFIVTSDDGRKVPVVQAYAFGKYLGYLKVEFDEKGNVVTSHGNPILLNSSIPEDPNIKADINKWRVKLDNYSTQELGKTIVYLDGTAQSCRFRECNMGNLICDAMINNNLRHPDEMSWNHVSMCILNGGGIRSPIDERNNGTITWENLAAVLPFGGTFDLVQLKGSTLKKAFEHSVHRYGQATGEFLQVGGIHVVYDISRNPGDRVVKLEVLCTQCRVPSYEPLRMDKVYKVILPSFLVSGGDGFQMIKDEKIKHDSGDQDINVVSGYISKMKVLYPAVEGRIQFSAGSHCCGSFSLIFLSVLAVIIILYQ</sequence>
<name>5NTD_BOVIN</name>
<gene>
    <name type="primary">NT5E</name>
    <name type="synonym">NT5</name>
    <name type="synonym">NTE</name>
</gene>
<accession>Q05927</accession>
<accession>Q24K05</accession>
<feature type="signal peptide" evidence="4">
    <location>
        <begin position="1"/>
        <end position="26"/>
    </location>
</feature>
<feature type="chain" id="PRO_0000000013" description="5'-nucleotidase">
    <location>
        <begin position="27"/>
        <end position="549"/>
    </location>
</feature>
<feature type="propeptide" id="PRO_0000000014" description="Removed in mature form" evidence="7">
    <location>
        <begin position="550"/>
        <end position="574"/>
    </location>
</feature>
<feature type="binding site" evidence="1">
    <location>
        <position position="36"/>
    </location>
    <ligand>
        <name>Zn(2+)</name>
        <dbReference type="ChEBI" id="CHEBI:29105"/>
        <label>1</label>
    </ligand>
</feature>
<feature type="binding site" evidence="1">
    <location>
        <position position="36"/>
    </location>
    <ligand>
        <name>Zn(2+)</name>
        <dbReference type="ChEBI" id="CHEBI:29105"/>
        <label>2</label>
    </ligand>
</feature>
<feature type="binding site" evidence="1">
    <location>
        <position position="38"/>
    </location>
    <ligand>
        <name>Zn(2+)</name>
        <dbReference type="ChEBI" id="CHEBI:29105"/>
        <label>1</label>
    </ligand>
</feature>
<feature type="binding site" evidence="1">
    <location>
        <position position="85"/>
    </location>
    <ligand>
        <name>Zn(2+)</name>
        <dbReference type="ChEBI" id="CHEBI:29105"/>
        <label>1</label>
    </ligand>
</feature>
<feature type="binding site" evidence="1">
    <location>
        <position position="85"/>
    </location>
    <ligand>
        <name>Zn(2+)</name>
        <dbReference type="ChEBI" id="CHEBI:29105"/>
        <label>2</label>
    </ligand>
</feature>
<feature type="binding site" evidence="1">
    <location>
        <position position="117"/>
    </location>
    <ligand>
        <name>Zn(2+)</name>
        <dbReference type="ChEBI" id="CHEBI:29105"/>
        <label>2</label>
    </ligand>
</feature>
<feature type="binding site" evidence="1">
    <location>
        <position position="220"/>
    </location>
    <ligand>
        <name>Zn(2+)</name>
        <dbReference type="ChEBI" id="CHEBI:29105"/>
        <label>2</label>
    </ligand>
</feature>
<feature type="binding site" evidence="1">
    <location>
        <position position="243"/>
    </location>
    <ligand>
        <name>Zn(2+)</name>
        <dbReference type="ChEBI" id="CHEBI:29105"/>
        <label>2</label>
    </ligand>
</feature>
<feature type="binding site" evidence="1">
    <location>
        <position position="354"/>
    </location>
    <ligand>
        <name>AMP</name>
        <dbReference type="ChEBI" id="CHEBI:456215"/>
    </ligand>
</feature>
<feature type="binding site" evidence="1">
    <location>
        <position position="354"/>
    </location>
    <ligand>
        <name>IMP</name>
        <dbReference type="ChEBI" id="CHEBI:58053"/>
    </ligand>
</feature>
<feature type="binding site" evidence="1">
    <location>
        <position position="390"/>
    </location>
    <ligand>
        <name>AMP</name>
        <dbReference type="ChEBI" id="CHEBI:456215"/>
    </ligand>
</feature>
<feature type="binding site" evidence="1">
    <location>
        <position position="390"/>
    </location>
    <ligand>
        <name>IMP</name>
        <dbReference type="ChEBI" id="CHEBI:58053"/>
    </ligand>
</feature>
<feature type="binding site" evidence="1">
    <location>
        <position position="395"/>
    </location>
    <ligand>
        <name>AMP</name>
        <dbReference type="ChEBI" id="CHEBI:456215"/>
    </ligand>
</feature>
<feature type="binding site" evidence="1">
    <location>
        <position position="395"/>
    </location>
    <ligand>
        <name>IMP</name>
        <dbReference type="ChEBI" id="CHEBI:58053"/>
    </ligand>
</feature>
<feature type="binding site" evidence="1">
    <location>
        <position position="417"/>
    </location>
    <ligand>
        <name>AMP</name>
        <dbReference type="ChEBI" id="CHEBI:456215"/>
    </ligand>
</feature>
<feature type="binding site" evidence="1">
    <location>
        <position position="417"/>
    </location>
    <ligand>
        <name>IMP</name>
        <dbReference type="ChEBI" id="CHEBI:58053"/>
    </ligand>
</feature>
<feature type="binding site" evidence="1">
    <location>
        <position position="500"/>
    </location>
    <ligand>
        <name>AMP</name>
        <dbReference type="ChEBI" id="CHEBI:456215"/>
    </ligand>
</feature>
<feature type="binding site" evidence="1">
    <location>
        <position position="500"/>
    </location>
    <ligand>
        <name>IMP</name>
        <dbReference type="ChEBI" id="CHEBI:58053"/>
    </ligand>
</feature>
<feature type="binding site" evidence="1">
    <location>
        <position position="506"/>
    </location>
    <ligand>
        <name>AMP</name>
        <dbReference type="ChEBI" id="CHEBI:456215"/>
    </ligand>
</feature>
<feature type="binding site" evidence="1">
    <location>
        <position position="506"/>
    </location>
    <ligand>
        <name>IMP</name>
        <dbReference type="ChEBI" id="CHEBI:58053"/>
    </ligand>
</feature>
<feature type="site" description="Transition state stabilizer" evidence="1">
    <location>
        <position position="118"/>
    </location>
</feature>
<feature type="site" description="Transition state stabilizer" evidence="1">
    <location>
        <position position="121"/>
    </location>
</feature>
<feature type="lipid moiety-binding region" description="GPI-anchor amidated serine" evidence="1">
    <location>
        <position position="549"/>
    </location>
</feature>
<feature type="glycosylation site" description="N-linked (GlcNAc...) asparagine" evidence="2">
    <location>
        <position position="53"/>
    </location>
</feature>
<feature type="glycosylation site" description="N-linked (GlcNAc...) asparagine" evidence="2">
    <location>
        <position position="311"/>
    </location>
</feature>
<feature type="glycosylation site" description="N-linked (GlcNAc...) asparagine" evidence="2">
    <location>
        <position position="333"/>
    </location>
</feature>
<feature type="glycosylation site" description="N-linked (GlcNAc...) asparagine" evidence="2">
    <location>
        <position position="403"/>
    </location>
</feature>
<feature type="disulfide bond" evidence="1">
    <location>
        <begin position="51"/>
        <end position="57"/>
    </location>
</feature>
<feature type="disulfide bond" evidence="1">
    <location>
        <begin position="353"/>
        <end position="358"/>
    </location>
</feature>
<feature type="disulfide bond" evidence="1">
    <location>
        <begin position="365"/>
        <end position="387"/>
    </location>
</feature>
<feature type="disulfide bond" evidence="1">
    <location>
        <begin position="476"/>
        <end position="479"/>
    </location>
</feature>
<feature type="sequence conflict" description="In Ref. 1; BAA03408/AAB27698." evidence="5" ref="1">
    <original>A</original>
    <variation>P</variation>
    <location>
        <position position="15"/>
    </location>
</feature>
<feature type="sequence conflict" description="In Ref. 1; BAA03408/AAB27698." evidence="5" ref="1">
    <original>DA</original>
    <variation>ES</variation>
    <location>
        <begin position="111"/>
        <end position="112"/>
    </location>
</feature>
<feature type="sequence conflict" description="In Ref. 1; BAA03408/AAB27698." evidence="5" ref="1">
    <original>EHS</original>
    <variation>DDT</variation>
    <location>
        <begin position="436"/>
        <end position="438"/>
    </location>
</feature>
<feature type="sequence conflict" description="In Ref. 1; BAA03408/AAB27698." evidence="5" ref="1">
    <original>A</original>
    <variation>R</variation>
    <location>
        <position position="445"/>
    </location>
</feature>
<reference key="1">
    <citation type="journal article" date="1993" name="J. Biochem.">
        <title>Purification and cDNA cloning of bovine liver 5'-nucleotidase, a GPI-anchored protein, and its expression in COS cells.</title>
        <authorList>
            <person name="Suzuki K."/>
            <person name="Furukawa Y."/>
            <person name="Tamura H."/>
            <person name="Ejiri N."/>
            <person name="Suematsu H."/>
            <person name="Taguchi R."/>
            <person name="Nakamura S."/>
            <person name="Suzuki Y."/>
            <person name="Ikezawa H."/>
        </authorList>
    </citation>
    <scope>NUCLEOTIDE SEQUENCE [MRNA]</scope>
    <scope>PROTEIN SEQUENCE OF N-TERMINUS</scope>
    <scope>PARTIAL PROTEIN SEQUENCE</scope>
    <scope>FUNCTION</scope>
    <scope>CATALYTIC ACTIVITY</scope>
    <scope>SUBCELLULAR LOCATION</scope>
    <source>
        <tissue>Liver</tissue>
    </source>
</reference>
<reference key="2">
    <citation type="submission" date="2006-02" db="EMBL/GenBank/DDBJ databases">
        <authorList>
            <consortium name="NIH - Mammalian Gene Collection (MGC) project"/>
        </authorList>
    </citation>
    <scope>NUCLEOTIDE SEQUENCE [LARGE SCALE MRNA]</scope>
    <source>
        <strain>Hereford</strain>
        <tissue>Hypothalamus</tissue>
    </source>
</reference>
<reference key="3">
    <citation type="journal article" date="2005" name="BMC Genomics">
        <title>Characterization of 954 bovine full-CDS cDNA sequences.</title>
        <authorList>
            <person name="Harhay G.P."/>
            <person name="Sonstegard T.S."/>
            <person name="Keele J.W."/>
            <person name="Heaton M.P."/>
            <person name="Clawson M.L."/>
            <person name="Snelling W.M."/>
            <person name="Wiedmann R.T."/>
            <person name="Van Tassell C.P."/>
            <person name="Smith T.P.L."/>
        </authorList>
    </citation>
    <scope>NUCLEOTIDE SEQUENCE [LARGE SCALE MRNA]</scope>
</reference>
<reference key="4">
    <citation type="journal article" date="2000" name="Biochim. Biophys. Acta">
        <title>The ecto-5'-nucleotidase subunits in dimers are not linked by disulfide bridges but by non-covalent bonds.</title>
        <authorList>
            <person name="Martinez-Martinez A."/>
            <person name="Munoz-Delgado E."/>
            <person name="Campoy F.J."/>
            <person name="Flores-Flores C."/>
            <person name="Rodriguez-Lopez J.N."/>
            <person name="Fini C."/>
            <person name="Vidal C.J."/>
        </authorList>
    </citation>
    <scope>SUBUNIT</scope>
    <scope>FUNCTION</scope>
    <scope>CATALYTIC ACTIVITY</scope>
</reference>
<organism>
    <name type="scientific">Bos taurus</name>
    <name type="common">Bovine</name>
    <dbReference type="NCBI Taxonomy" id="9913"/>
    <lineage>
        <taxon>Eukaryota</taxon>
        <taxon>Metazoa</taxon>
        <taxon>Chordata</taxon>
        <taxon>Craniata</taxon>
        <taxon>Vertebrata</taxon>
        <taxon>Euteleostomi</taxon>
        <taxon>Mammalia</taxon>
        <taxon>Eutheria</taxon>
        <taxon>Laurasiatheria</taxon>
        <taxon>Artiodactyla</taxon>
        <taxon>Ruminantia</taxon>
        <taxon>Pecora</taxon>
        <taxon>Bovidae</taxon>
        <taxon>Bovinae</taxon>
        <taxon>Bos</taxon>
    </lineage>
</organism>
<comment type="function">
    <text evidence="1 3 4">Catalyzes the hydrolysis of nucleotide monophosphates, releasing inorganic phosphate and the corresponding nucleoside, with AMP being the preferred substrate (PubMed:10825541, PubMed:8340354). Shows a preference for ribonucleotide monophosphates over their equivalent deoxyribose forms (By similarity). Other substrates include IMP, UMP, GMP, CMP, dAMP, dCMP, dTMP, NAD and NMN (By similarity).</text>
</comment>
<comment type="catalytic activity">
    <reaction evidence="3 4">
        <text>a ribonucleoside 5'-phosphate + H2O = a ribonucleoside + phosphate</text>
        <dbReference type="Rhea" id="RHEA:12484"/>
        <dbReference type="ChEBI" id="CHEBI:15377"/>
        <dbReference type="ChEBI" id="CHEBI:18254"/>
        <dbReference type="ChEBI" id="CHEBI:43474"/>
        <dbReference type="ChEBI" id="CHEBI:58043"/>
        <dbReference type="EC" id="3.1.3.5"/>
    </reaction>
</comment>
<comment type="catalytic activity">
    <reaction evidence="1">
        <text>a 2'-deoxyribonucleoside 5'-phosphate + H2O = a 2'-deoxyribonucleoside + phosphate</text>
        <dbReference type="Rhea" id="RHEA:36167"/>
        <dbReference type="ChEBI" id="CHEBI:15377"/>
        <dbReference type="ChEBI" id="CHEBI:18274"/>
        <dbReference type="ChEBI" id="CHEBI:43474"/>
        <dbReference type="ChEBI" id="CHEBI:65317"/>
        <dbReference type="EC" id="3.1.3.89"/>
    </reaction>
</comment>
<comment type="catalytic activity">
    <reaction evidence="1">
        <text>dTMP + H2O = thymidine + phosphate</text>
        <dbReference type="Rhea" id="RHEA:11080"/>
        <dbReference type="ChEBI" id="CHEBI:15377"/>
        <dbReference type="ChEBI" id="CHEBI:17748"/>
        <dbReference type="ChEBI" id="CHEBI:43474"/>
        <dbReference type="ChEBI" id="CHEBI:63528"/>
        <dbReference type="EC" id="3.1.3.35"/>
    </reaction>
</comment>
<comment type="catalytic activity">
    <reaction evidence="1">
        <text>CMP + H2O = cytidine + phosphate</text>
        <dbReference type="Rhea" id="RHEA:29367"/>
        <dbReference type="ChEBI" id="CHEBI:15377"/>
        <dbReference type="ChEBI" id="CHEBI:17562"/>
        <dbReference type="ChEBI" id="CHEBI:43474"/>
        <dbReference type="ChEBI" id="CHEBI:60377"/>
        <dbReference type="EC" id="3.1.3.91"/>
    </reaction>
</comment>
<comment type="catalytic activity">
    <reaction evidence="1">
        <text>IMP + H2O = inosine + phosphate</text>
        <dbReference type="Rhea" id="RHEA:27718"/>
        <dbReference type="ChEBI" id="CHEBI:15377"/>
        <dbReference type="ChEBI" id="CHEBI:17596"/>
        <dbReference type="ChEBI" id="CHEBI:43474"/>
        <dbReference type="ChEBI" id="CHEBI:58053"/>
        <dbReference type="EC" id="3.1.3.99"/>
    </reaction>
</comment>
<comment type="catalytic activity">
    <reaction evidence="3 4">
        <text>AMP + H2O = adenosine + phosphate</text>
        <dbReference type="Rhea" id="RHEA:29375"/>
        <dbReference type="ChEBI" id="CHEBI:15377"/>
        <dbReference type="ChEBI" id="CHEBI:16335"/>
        <dbReference type="ChEBI" id="CHEBI:43474"/>
        <dbReference type="ChEBI" id="CHEBI:456215"/>
    </reaction>
</comment>
<comment type="catalytic activity">
    <reaction evidence="1">
        <text>GMP + H2O = guanosine + phosphate</text>
        <dbReference type="Rhea" id="RHEA:27714"/>
        <dbReference type="ChEBI" id="CHEBI:15377"/>
        <dbReference type="ChEBI" id="CHEBI:16750"/>
        <dbReference type="ChEBI" id="CHEBI:43474"/>
        <dbReference type="ChEBI" id="CHEBI:58115"/>
    </reaction>
</comment>
<comment type="catalytic activity">
    <reaction evidence="1">
        <text>UMP + H2O = uridine + phosphate</text>
        <dbReference type="Rhea" id="RHEA:29359"/>
        <dbReference type="ChEBI" id="CHEBI:15377"/>
        <dbReference type="ChEBI" id="CHEBI:16704"/>
        <dbReference type="ChEBI" id="CHEBI:43474"/>
        <dbReference type="ChEBI" id="CHEBI:57865"/>
    </reaction>
</comment>
<comment type="catalytic activity">
    <reaction evidence="1">
        <text>dAMP + H2O = 2'-deoxyadenosine + phosphate</text>
        <dbReference type="Rhea" id="RHEA:29371"/>
        <dbReference type="ChEBI" id="CHEBI:15377"/>
        <dbReference type="ChEBI" id="CHEBI:17256"/>
        <dbReference type="ChEBI" id="CHEBI:43474"/>
        <dbReference type="ChEBI" id="CHEBI:58245"/>
    </reaction>
</comment>
<comment type="catalytic activity">
    <reaction evidence="1">
        <text>dCMP + H2O = 2'-deoxycytidine + phosphate</text>
        <dbReference type="Rhea" id="RHEA:29363"/>
        <dbReference type="ChEBI" id="CHEBI:15377"/>
        <dbReference type="ChEBI" id="CHEBI:15698"/>
        <dbReference type="ChEBI" id="CHEBI:43474"/>
        <dbReference type="ChEBI" id="CHEBI:57566"/>
    </reaction>
</comment>
<comment type="cofactor">
    <cofactor evidence="1">
        <name>Zn(2+)</name>
        <dbReference type="ChEBI" id="CHEBI:29105"/>
    </cofactor>
</comment>
<comment type="subunit">
    <text evidence="3">Homodimer.</text>
</comment>
<comment type="subcellular location">
    <subcellularLocation>
        <location evidence="4">Cell membrane</location>
        <topology evidence="4">Lipid-anchor</topology>
        <topology evidence="4">GPI-anchor</topology>
    </subcellularLocation>
</comment>
<comment type="similarity">
    <text evidence="5">Belongs to the 5'-nucleotidase family.</text>
</comment>
<comment type="caution">
    <text evidence="6">The homodimer was initially thought to be disulfide bonded; however it is not the case.</text>
</comment>
<proteinExistence type="evidence at protein level"/>
<evidence type="ECO:0000250" key="1">
    <source>
        <dbReference type="UniProtKB" id="P21589"/>
    </source>
</evidence>
<evidence type="ECO:0000255" key="2"/>
<evidence type="ECO:0000269" key="3">
    <source>
    </source>
</evidence>
<evidence type="ECO:0000269" key="4">
    <source>
    </source>
</evidence>
<evidence type="ECO:0000305" key="5"/>
<evidence type="ECO:0000305" key="6">
    <source>
    </source>
</evidence>
<evidence type="ECO:0000305" key="7">
    <source>
    </source>
</evidence>
<protein>
    <recommendedName>
        <fullName>5'-nucleotidase</fullName>
        <shortName>5'-NT</shortName>
        <ecNumber evidence="1">3.1.3.35</ecNumber>
        <ecNumber evidence="3 4">3.1.3.5</ecNumber>
        <ecNumber evidence="1">3.1.3.89</ecNumber>
        <ecNumber evidence="1">3.1.3.91</ecNumber>
        <ecNumber evidence="1">3.1.3.99</ecNumber>
    </recommendedName>
    <alternativeName>
        <fullName evidence="1">5'-deoxynucleotidase</fullName>
    </alternativeName>
    <alternativeName>
        <fullName>Ecto-5'-nucleotidase</fullName>
    </alternativeName>
    <alternativeName>
        <fullName evidence="1">IMP-specific 5'-nucleotidase</fullName>
    </alternativeName>
    <alternativeName>
        <fullName evidence="1">Thymidylate 5'-phosphatase</fullName>
    </alternativeName>
    <cdAntigenName>CD73</cdAntigenName>
</protein>
<keyword id="KW-1003">Cell membrane</keyword>
<keyword id="KW-0903">Direct protein sequencing</keyword>
<keyword id="KW-1015">Disulfide bond</keyword>
<keyword id="KW-0325">Glycoprotein</keyword>
<keyword id="KW-0336">GPI-anchor</keyword>
<keyword id="KW-0378">Hydrolase</keyword>
<keyword id="KW-0449">Lipoprotein</keyword>
<keyword id="KW-0472">Membrane</keyword>
<keyword id="KW-0479">Metal-binding</keyword>
<keyword id="KW-0547">Nucleotide-binding</keyword>
<keyword id="KW-1185">Reference proteome</keyword>
<keyword id="KW-0732">Signal</keyword>
<keyword id="KW-0862">Zinc</keyword>